<organism>
    <name type="scientific">Homo sapiens</name>
    <name type="common">Human</name>
    <dbReference type="NCBI Taxonomy" id="9606"/>
    <lineage>
        <taxon>Eukaryota</taxon>
        <taxon>Metazoa</taxon>
        <taxon>Chordata</taxon>
        <taxon>Craniata</taxon>
        <taxon>Vertebrata</taxon>
        <taxon>Euteleostomi</taxon>
        <taxon>Mammalia</taxon>
        <taxon>Eutheria</taxon>
        <taxon>Euarchontoglires</taxon>
        <taxon>Primates</taxon>
        <taxon>Haplorrhini</taxon>
        <taxon>Catarrhini</taxon>
        <taxon>Hominidae</taxon>
        <taxon>Homo</taxon>
    </lineage>
</organism>
<comment type="function">
    <text evidence="7 8 13 14">Mitochondrial outer membrane GTPase that mediates mitochondrial clustering and fusion (PubMed:12475957, PubMed:12759376, PubMed:27920125, PubMed:28114303). Membrane clustering requires GTPase activity (PubMed:27920125). It may involve a major rearrangement of the coiled coil domains (PubMed:27920125, PubMed:28114303). Mitochondria are highly dynamic organelles, and their morphology is determined by the equilibrium between mitochondrial fusion and fission events (PubMed:12475957, PubMed:12759376). Overexpression induces the formation of mitochondrial networks (in vitro) (PubMed:12759376). Has low GTPase activity (PubMed:27920125, PubMed:28114303).</text>
</comment>
<comment type="catalytic activity">
    <reaction evidence="13 14">
        <text>GTP + H2O = GDP + phosphate + H(+)</text>
        <dbReference type="Rhea" id="RHEA:19669"/>
        <dbReference type="ChEBI" id="CHEBI:15377"/>
        <dbReference type="ChEBI" id="CHEBI:15378"/>
        <dbReference type="ChEBI" id="CHEBI:37565"/>
        <dbReference type="ChEBI" id="CHEBI:43474"/>
        <dbReference type="ChEBI" id="CHEBI:58189"/>
    </reaction>
</comment>
<comment type="subunit">
    <text evidence="1 2 8 12 13">Homodimer, also in the absence of bound GTP (PubMed:27920125, PubMed:28114303). Forms higher oligomers in the presence of a transition state GTP analog (PubMed:28114303). Forms homomultimers and heteromultimers with MFN2 (By similarity). Oligomerization is essential for mitochondrion fusion (PubMed:27920125, PubMed:28114303). Component of a high molecular weight multiprotein complex (PubMed:12759376). Interacts with VAT1 (By similarity). Interacts with THG1L; THG1L probably functions as a guanyl-nucleotide exchange factor/GEF, activating MFN1.</text>
</comment>
<comment type="interaction">
    <interactant intactId="EBI-1048197">
        <id>Q8IWA4</id>
    </interactant>
    <interactant intactId="EBI-995373">
        <id>Q7Z434</id>
        <label>MAVS</label>
    </interactant>
    <organismsDiffer>false</organismsDiffer>
    <experiments>2</experiments>
</comment>
<comment type="interaction">
    <interactant intactId="EBI-1048197">
        <id>Q8IWA4</id>
    </interactant>
    <interactant intactId="EBI-1048197">
        <id>Q8IWA4</id>
        <label>MFN1</label>
    </interactant>
    <organismsDiffer>false</organismsDiffer>
    <experiments>13</experiments>
</comment>
<comment type="interaction">
    <interactant intactId="EBI-1048197">
        <id>Q8IWA4</id>
    </interactant>
    <interactant intactId="EBI-3324756">
        <id>O95140</id>
        <label>MFN2</label>
    </interactant>
    <organismsDiffer>false</organismsDiffer>
    <experiments>5</experiments>
</comment>
<comment type="subcellular location">
    <subcellularLocation>
        <location evidence="8 21">Mitochondrion outer membrane</location>
        <topology evidence="20">Multi-pass membrane protein</topology>
    </subcellularLocation>
</comment>
<comment type="subcellular location">
    <molecule>Isoform 2</molecule>
    <subcellularLocation>
        <location evidence="5">Cytoplasm</location>
    </subcellularLocation>
</comment>
<comment type="alternative products">
    <event type="alternative splicing"/>
    <isoform>
        <id>Q8IWA4-1</id>
        <name>1</name>
        <name evidence="15">TG741</name>
        <sequence type="displayed"/>
    </isoform>
    <isoform>
        <id>Q8IWA4-2</id>
        <name>2</name>
        <name evidence="15">TG370</name>
        <sequence type="described" ref="VSP_010362 VSP_010363"/>
    </isoform>
    <isoform>
        <id>Q8IWA4-3</id>
        <name>3</name>
        <sequence type="described" ref="VSP_010364"/>
    </isoform>
</comment>
<comment type="tissue specificity">
    <text evidence="5 6 8">Detected in kidney and heart (at protein level) (PubMed:12759376). Ubiquitous (PubMed:11950885, PubMed:12759376). Expressed at slightly higher level in kidney and heart (PubMed:12759376). Isoform 2 may be overexpressed in some tumors, such as lung cancers (PubMed:11751411).</text>
</comment>
<comment type="domain">
    <text evidence="13 14">A helix bundle is formed by helices from the N-terminal and the C-terminal part of the protein. The GTPase domain cannot be expressed by itself, without the helix bundle. Rearrangement of the helix bundle and/or of the coiled coil domains may bring membranes from adjacent mitochondria into close contact, and thereby play a role in mitochondrial fusion.</text>
</comment>
<comment type="PTM">
    <text evidence="1 10 11">Ubiquitinated by non-degradative ubiquitin by PRKN (PubMed:23933751). Deubiquitination by USP30 inhibits mitochondrial fusion (By similarity). Ubiquitinated by MARCHF5 (PubMed:20103533). When mitochondria are depolarized and dysfunctional, it is ubiquitinated by a SCF (SKP1-CUL1-F-box protein) E3 ubiquitin-protein ligase complex that contains FBXO7 and PRKN (PubMed:23933751).</text>
</comment>
<comment type="miscellaneous">
    <text evidence="13 14">A truncated MFN1 construct containing the GTPase domain and the associated helix bundle is a monomer in the absence of bound GTP and a homodimer in the GTP-bound form; GDP cannot replace GTP and induce dimerization.</text>
</comment>
<comment type="similarity">
    <text evidence="4">Belongs to the TRAFAC class dynamin-like GTPase superfamily. Dynamin/Fzo/YdjA family. Mitofusin subfamily.</text>
</comment>
<accession>Q8IWA4</accession>
<accession>A0A0C4DFN1</accession>
<accession>B2RAR1</accession>
<accession>D3DNR6</accession>
<accession>O15323</accession>
<accession>O60639</accession>
<accession>Q9BZB5</accession>
<accession>Q9NWQ2</accession>
<feature type="chain" id="PRO_0000127672" description="Mitofusin-1">
    <location>
        <begin position="1"/>
        <end position="741"/>
    </location>
</feature>
<feature type="topological domain" description="Cytoplasmic" evidence="3">
    <location>
        <begin position="1"/>
        <end position="584"/>
    </location>
</feature>
<feature type="transmembrane region" description="Helical; Name=1" evidence="3">
    <location>
        <begin position="585"/>
        <end position="605"/>
    </location>
</feature>
<feature type="topological domain" description="Mitochondrial intermembrane" evidence="3">
    <location>
        <begin position="606"/>
        <end position="608"/>
    </location>
</feature>
<feature type="transmembrane region" description="Helical; Name=2" evidence="3">
    <location>
        <begin position="609"/>
        <end position="629"/>
    </location>
</feature>
<feature type="topological domain" description="Cytoplasmic" evidence="3">
    <location>
        <begin position="630"/>
        <end position="741"/>
    </location>
</feature>
<feature type="domain" description="Dynamin-type G" evidence="4">
    <location>
        <begin position="72"/>
        <end position="321"/>
    </location>
</feature>
<feature type="region of interest" description="Part of a helix bundle domain, formed by helices from N-terminal and C-terminal regions" evidence="9 14">
    <location>
        <begin position="9"/>
        <end position="73"/>
    </location>
</feature>
<feature type="region of interest" description="G1 motif" evidence="4">
    <location>
        <begin position="82"/>
        <end position="89"/>
    </location>
</feature>
<feature type="region of interest" description="G2 motif" evidence="4">
    <location>
        <begin position="108"/>
        <end position="109"/>
    </location>
</feature>
<feature type="region of interest" description="G3 motif" evidence="4">
    <location>
        <begin position="178"/>
        <end position="181"/>
    </location>
</feature>
<feature type="region of interest" description="G4 motif" evidence="4">
    <location>
        <begin position="237"/>
        <end position="240"/>
    </location>
</feature>
<feature type="region of interest" description="G5 motif" evidence="4">
    <location>
        <position position="266"/>
    </location>
</feature>
<feature type="region of interest" description="Part of a helix bundle domain, formed by helices from N-terminal and C-terminal regions" evidence="9 14">
    <location>
        <begin position="338"/>
        <end position="364"/>
    </location>
</feature>
<feature type="region of interest" description="Part of a helix bundle domain, formed by helices from N-terminal and C-terminal regions" evidence="9 14">
    <location>
        <begin position="703"/>
        <end position="734"/>
    </location>
</feature>
<feature type="coiled-coil region" evidence="3">
    <location>
        <begin position="371"/>
        <end position="408"/>
    </location>
</feature>
<feature type="coiled-coil region" evidence="3">
    <location>
        <begin position="679"/>
        <end position="734"/>
    </location>
</feature>
<feature type="binding site" evidence="13 14 22 23 24 25">
    <location>
        <begin position="85"/>
        <end position="90"/>
    </location>
    <ligand>
        <name>GTP</name>
        <dbReference type="ChEBI" id="CHEBI:37565"/>
    </ligand>
</feature>
<feature type="binding site" evidence="13 14 23 24 25">
    <location>
        <begin position="237"/>
        <end position="240"/>
    </location>
    <ligand>
        <name>GTP</name>
        <dbReference type="ChEBI" id="CHEBI:37565"/>
    </ligand>
</feature>
<feature type="binding site" evidence="13 14 22 24 25">
    <location>
        <position position="284"/>
    </location>
    <ligand>
        <name>GTP</name>
        <dbReference type="ChEBI" id="CHEBI:37565"/>
    </ligand>
</feature>
<feature type="binding site" evidence="13 23">
    <location>
        <position position="286"/>
    </location>
    <ligand>
        <name>GTP</name>
        <dbReference type="ChEBI" id="CHEBI:37565"/>
    </ligand>
</feature>
<feature type="splice variant" id="VSP_010362" description="In isoform 2." evidence="17">
    <original>HYSV</original>
    <variation>FHVQ</variation>
    <location>
        <begin position="367"/>
        <end position="370"/>
    </location>
</feature>
<feature type="splice variant" id="VSP_010363" description="In isoform 2." evidence="17">
    <location>
        <begin position="371"/>
        <end position="741"/>
    </location>
</feature>
<feature type="splice variant" id="VSP_010364" description="In isoform 3." evidence="18">
    <location>
        <begin position="444"/>
        <end position="554"/>
    </location>
</feature>
<feature type="sequence variant" id="VAR_036115" description="In a colorectal cancer sample; somatic mutation." evidence="9">
    <original>D</original>
    <variation>H</variation>
    <location>
        <position position="415"/>
    </location>
</feature>
<feature type="sequence variant" id="VAR_018606" description="In dbSNP:rs7637065.">
    <original>R</original>
    <variation>P</variation>
    <location>
        <position position="523"/>
    </location>
</feature>
<feature type="mutagenesis site" description="Decreases GTPase activity. Impairs mitochondrial fusion." evidence="13 14">
    <original>K</original>
    <variation>A</variation>
    <location>
        <position position="15"/>
    </location>
</feature>
<feature type="mutagenesis site" description="Mildly decreases GTPase activity and impairs mitochondrial fusion." evidence="14">
    <original>R</original>
    <variation>P</variation>
    <location>
        <position position="74"/>
    </location>
</feature>
<feature type="mutagenesis site" description="Abolishes GTPase activity. Abolishes dimerization." evidence="13">
    <original>K</original>
    <variation>A</variation>
    <location>
        <position position="88"/>
    </location>
</feature>
<feature type="mutagenesis site" description="Induces a strong decrease in mitochondrial clustering." evidence="8">
    <original>K</original>
    <variation>T</variation>
    <location>
        <position position="88"/>
    </location>
</feature>
<feature type="mutagenesis site" description="Mildly decreases GTPase activity." evidence="14">
    <original>K</original>
    <variation>A</variation>
    <location>
        <position position="99"/>
    </location>
</feature>
<feature type="mutagenesis site" description="Impairs protein folding. Decreases GTPase activity." evidence="13">
    <original>P</original>
    <variation>L</variation>
    <location>
        <position position="102"/>
    </location>
</feature>
<feature type="mutagenesis site" description="Loss of function in mitochondrial fusion. Abolishes GTPase activity, but has no effect on GTP binding." evidence="14">
    <original>H</original>
    <variation>A</variation>
    <location>
        <position position="107"/>
    </location>
</feature>
<feature type="mutagenesis site" description="Acts as a dominant negative mutant; induces fragmentation of mitochondria." evidence="8">
    <original>T</original>
    <variation>A</variation>
    <location>
        <position position="109"/>
    </location>
</feature>
<feature type="mutagenesis site" description="Abolishes GTPase activity. Abolishes dimerization." evidence="14">
    <original>H</original>
    <variation>A</variation>
    <location>
        <position position="144"/>
    </location>
</feature>
<feature type="mutagenesis site" description="Decreases GTPase activity." evidence="13">
    <original>D</original>
    <variation>A</variation>
    <location>
        <position position="173"/>
    </location>
</feature>
<feature type="mutagenesis site" description="Causes mitochondrial clumping." evidence="14">
    <original>D</original>
    <variation>A</variation>
    <location>
        <position position="189"/>
    </location>
</feature>
<feature type="mutagenesis site" description="Abolishes dimerization. Loss of function in mitochondrial fusion. Abolishes GTPase activity, but has no effect on GTP binding." evidence="14">
    <original>E</original>
    <variation>A</variation>
    <location>
        <position position="209"/>
    </location>
</feature>
<feature type="mutagenesis site" description="Abolishes dimerization. Loss of function in mitochondrial fusion. Abolishes GTPase activity, but has no effect on GTP binding." evidence="14">
    <original>R</original>
    <variation>A</variation>
    <location>
        <position position="238"/>
    </location>
</feature>
<feature type="mutagenesis site" description="Abolishes GTP binding and GTPase activity. Loss of function in mitochondrial fusion." evidence="14">
    <original>W</original>
    <variation>A</variation>
    <location>
        <position position="239"/>
    </location>
</feature>
<feature type="mutagenesis site" description="Decreases GTPase activity. Abolishes dimerization. Impairs mitochondrial fusion." evidence="14">
    <original>E</original>
    <variation>A</variation>
    <location>
        <position position="245"/>
    </location>
</feature>
<feature type="mutagenesis site" description="Mildly decreases GTPase activity and impairs mitochondrial fusion." evidence="14">
    <original>G</original>
    <variation>P</variation>
    <location>
        <position position="309"/>
    </location>
</feature>
<feature type="mutagenesis site" description="Slightly decreases GTPase activity." evidence="13">
    <original>I</original>
    <variation>A</variation>
    <location>
        <position position="328"/>
    </location>
</feature>
<feature type="mutagenesis site" description="Loss of function in mitochondrial fusion. Abolishes dimerization. Decreases GTPase activity." evidence="13">
    <original>K</original>
    <variation>N</variation>
    <location>
        <position position="336"/>
    </location>
</feature>
<feature type="mutagenesis site" description="Decreases GTPase activity and impairs mitochondrial fusion." evidence="14">
    <original>K</original>
    <variation>P</variation>
    <location>
        <position position="336"/>
    </location>
</feature>
<feature type="mutagenesis site" description="Impairs protein folding. Decreases GTPase activity." evidence="13 14">
    <original>L</original>
    <variation>P</variation>
    <location>
        <position position="705"/>
    </location>
</feature>
<feature type="mutagenesis site" description="Impairs protein folding." evidence="13">
    <original>F</original>
    <variation>P</variation>
    <location>
        <position position="733"/>
    </location>
</feature>
<feature type="sequence conflict" description="In Ref. 1; AAK06840." evidence="19" ref="1">
    <original>A</original>
    <variation>G</variation>
    <location>
        <position position="17"/>
    </location>
</feature>
<feature type="sequence conflict" description="In Ref. 2; BAA91327." evidence="19" ref="2">
    <original>I</original>
    <variation>V</variation>
    <location>
        <position position="21"/>
    </location>
</feature>
<feature type="sequence conflict" description="In Ref. 6; AAB64220." evidence="19" ref="6">
    <original>W</original>
    <variation>C</variation>
    <location>
        <position position="162"/>
    </location>
</feature>
<feature type="sequence conflict" description="In Ref. 1; AAK06840." evidence="19" ref="1">
    <original>R</original>
    <variation>W</variation>
    <location>
        <position position="226"/>
    </location>
</feature>
<feature type="sequence conflict" description="In Ref. 1; AAK06840." evidence="19" ref="1">
    <original>V</original>
    <variation>A</variation>
    <location>
        <position position="271"/>
    </location>
</feature>
<feature type="sequence conflict" description="In Ref. 6; AAB64220." evidence="19" ref="6">
    <original>A</original>
    <variation>P</variation>
    <location>
        <position position="406"/>
    </location>
</feature>
<feature type="sequence conflict" description="In Ref. 6; AAB64220." evidence="19" ref="6">
    <original>Q</original>
    <variation>H</variation>
    <location>
        <position position="688"/>
    </location>
</feature>
<feature type="helix" evidence="29">
    <location>
        <begin position="9"/>
        <end position="41"/>
    </location>
</feature>
<feature type="strand" evidence="27">
    <location>
        <begin position="43"/>
        <end position="45"/>
    </location>
</feature>
<feature type="strand" evidence="29">
    <location>
        <begin position="46"/>
        <end position="49"/>
    </location>
</feature>
<feature type="helix" evidence="29">
    <location>
        <begin position="51"/>
        <end position="72"/>
    </location>
</feature>
<feature type="strand" evidence="29">
    <location>
        <begin position="76"/>
        <end position="81"/>
    </location>
</feature>
<feature type="helix" evidence="27">
    <location>
        <begin position="84"/>
        <end position="86"/>
    </location>
</feature>
<feature type="helix" evidence="29">
    <location>
        <begin position="88"/>
        <end position="96"/>
    </location>
</feature>
<feature type="helix" evidence="28">
    <location>
        <begin position="105"/>
        <end position="108"/>
    </location>
</feature>
<feature type="strand" evidence="29">
    <location>
        <begin position="112"/>
        <end position="122"/>
    </location>
</feature>
<feature type="strand" evidence="29">
    <location>
        <begin position="124"/>
        <end position="126"/>
    </location>
</feature>
<feature type="helix" evidence="29">
    <location>
        <begin position="136"/>
        <end position="141"/>
    </location>
</feature>
<feature type="turn" evidence="30">
    <location>
        <begin position="145"/>
        <end position="147"/>
    </location>
</feature>
<feature type="strand" evidence="29">
    <location>
        <begin position="157"/>
        <end position="163"/>
    </location>
</feature>
<feature type="helix" evidence="29">
    <location>
        <begin position="164"/>
        <end position="166"/>
    </location>
</feature>
<feature type="helix" evidence="29">
    <location>
        <begin position="168"/>
        <end position="171"/>
    </location>
</feature>
<feature type="strand" evidence="29">
    <location>
        <begin position="174"/>
        <end position="178"/>
    </location>
</feature>
<feature type="helix" evidence="28">
    <location>
        <begin position="182"/>
        <end position="184"/>
    </location>
</feature>
<feature type="helix" evidence="29">
    <location>
        <begin position="189"/>
        <end position="195"/>
    </location>
</feature>
<feature type="turn" evidence="29">
    <location>
        <begin position="196"/>
        <end position="198"/>
    </location>
</feature>
<feature type="strand" evidence="29">
    <location>
        <begin position="200"/>
        <end position="207"/>
    </location>
</feature>
<feature type="helix" evidence="29">
    <location>
        <begin position="214"/>
        <end position="226"/>
    </location>
</feature>
<feature type="strand" evidence="29">
    <location>
        <begin position="227"/>
        <end position="229"/>
    </location>
</feature>
<feature type="strand" evidence="29">
    <location>
        <begin position="231"/>
        <end position="237"/>
    </location>
</feature>
<feature type="helix" evidence="29">
    <location>
        <begin position="239"/>
        <end position="242"/>
    </location>
</feature>
<feature type="helix" evidence="29">
    <location>
        <begin position="246"/>
        <end position="265"/>
    </location>
</feature>
<feature type="helix" evidence="29">
    <location>
        <begin position="273"/>
        <end position="277"/>
    </location>
</feature>
<feature type="strand" evidence="29">
    <location>
        <begin position="280"/>
        <end position="282"/>
    </location>
</feature>
<feature type="helix" evidence="29">
    <location>
        <begin position="285"/>
        <end position="292"/>
    </location>
</feature>
<feature type="turn" evidence="26">
    <location>
        <begin position="294"/>
        <end position="296"/>
    </location>
</feature>
<feature type="helix" evidence="27">
    <location>
        <begin position="301"/>
        <end position="303"/>
    </location>
</feature>
<feature type="strand" evidence="26">
    <location>
        <begin position="306"/>
        <end position="308"/>
    </location>
</feature>
<feature type="helix" evidence="29">
    <location>
        <begin position="310"/>
        <end position="362"/>
    </location>
</feature>
<feature type="helix" evidence="29">
    <location>
        <begin position="374"/>
        <end position="390"/>
    </location>
</feature>
<feature type="helix" evidence="29">
    <location>
        <begin position="395"/>
        <end position="407"/>
    </location>
</feature>
<feature type="helix" evidence="27">
    <location>
        <begin position="410"/>
        <end position="431"/>
    </location>
</feature>
<feature type="helix" evidence="29">
    <location>
        <begin position="729"/>
        <end position="733"/>
    </location>
</feature>
<keyword id="KW-0002">3D-structure</keyword>
<keyword id="KW-0025">Alternative splicing</keyword>
<keyword id="KW-0175">Coiled coil</keyword>
<keyword id="KW-0963">Cytoplasm</keyword>
<keyword id="KW-0342">GTP-binding</keyword>
<keyword id="KW-0378">Hydrolase</keyword>
<keyword id="KW-0472">Membrane</keyword>
<keyword id="KW-0496">Mitochondrion</keyword>
<keyword id="KW-1000">Mitochondrion outer membrane</keyword>
<keyword id="KW-0547">Nucleotide-binding</keyword>
<keyword id="KW-1267">Proteomics identification</keyword>
<keyword id="KW-1185">Reference proteome</keyword>
<keyword id="KW-0812">Transmembrane</keyword>
<keyword id="KW-1133">Transmembrane helix</keyword>
<keyword id="KW-0832">Ubl conjugation</keyword>
<reference key="1">
    <citation type="journal article" date="2001" name="J. Cell Sci.">
        <title>Control of mitochondrial morphology by a human mitofusin.</title>
        <authorList>
            <person name="Santel A."/>
            <person name="Fuller M.T."/>
        </authorList>
    </citation>
    <scope>NUCLEOTIDE SEQUENCE [MRNA] (ISOFORM 1)</scope>
    <source>
        <tissue>Heart</tissue>
    </source>
</reference>
<reference key="2">
    <citation type="journal article" date="2004" name="Nat. Genet.">
        <title>Complete sequencing and characterization of 21,243 full-length human cDNAs.</title>
        <authorList>
            <person name="Ota T."/>
            <person name="Suzuki Y."/>
            <person name="Nishikawa T."/>
            <person name="Otsuki T."/>
            <person name="Sugiyama T."/>
            <person name="Irie R."/>
            <person name="Wakamatsu A."/>
            <person name="Hayashi K."/>
            <person name="Sato H."/>
            <person name="Nagai K."/>
            <person name="Kimura K."/>
            <person name="Makita H."/>
            <person name="Sekine M."/>
            <person name="Obayashi M."/>
            <person name="Nishi T."/>
            <person name="Shibahara T."/>
            <person name="Tanaka T."/>
            <person name="Ishii S."/>
            <person name="Yamamoto J."/>
            <person name="Saito K."/>
            <person name="Kawai Y."/>
            <person name="Isono Y."/>
            <person name="Nakamura Y."/>
            <person name="Nagahari K."/>
            <person name="Murakami K."/>
            <person name="Yasuda T."/>
            <person name="Iwayanagi T."/>
            <person name="Wagatsuma M."/>
            <person name="Shiratori A."/>
            <person name="Sudo H."/>
            <person name="Hosoiri T."/>
            <person name="Kaku Y."/>
            <person name="Kodaira H."/>
            <person name="Kondo H."/>
            <person name="Sugawara M."/>
            <person name="Takahashi M."/>
            <person name="Kanda K."/>
            <person name="Yokoi T."/>
            <person name="Furuya T."/>
            <person name="Kikkawa E."/>
            <person name="Omura Y."/>
            <person name="Abe K."/>
            <person name="Kamihara K."/>
            <person name="Katsuta N."/>
            <person name="Sato K."/>
            <person name="Tanikawa M."/>
            <person name="Yamazaki M."/>
            <person name="Ninomiya K."/>
            <person name="Ishibashi T."/>
            <person name="Yamashita H."/>
            <person name="Murakawa K."/>
            <person name="Fujimori K."/>
            <person name="Tanai H."/>
            <person name="Kimata M."/>
            <person name="Watanabe M."/>
            <person name="Hiraoka S."/>
            <person name="Chiba Y."/>
            <person name="Ishida S."/>
            <person name="Ono Y."/>
            <person name="Takiguchi S."/>
            <person name="Watanabe S."/>
            <person name="Yosida M."/>
            <person name="Hotuta T."/>
            <person name="Kusano J."/>
            <person name="Kanehori K."/>
            <person name="Takahashi-Fujii A."/>
            <person name="Hara H."/>
            <person name="Tanase T.-O."/>
            <person name="Nomura Y."/>
            <person name="Togiya S."/>
            <person name="Komai F."/>
            <person name="Hara R."/>
            <person name="Takeuchi K."/>
            <person name="Arita M."/>
            <person name="Imose N."/>
            <person name="Musashino K."/>
            <person name="Yuuki H."/>
            <person name="Oshima A."/>
            <person name="Sasaki N."/>
            <person name="Aotsuka S."/>
            <person name="Yoshikawa Y."/>
            <person name="Matsunawa H."/>
            <person name="Ichihara T."/>
            <person name="Shiohata N."/>
            <person name="Sano S."/>
            <person name="Moriya S."/>
            <person name="Momiyama H."/>
            <person name="Satoh N."/>
            <person name="Takami S."/>
            <person name="Terashima Y."/>
            <person name="Suzuki O."/>
            <person name="Nakagawa S."/>
            <person name="Senoh A."/>
            <person name="Mizoguchi H."/>
            <person name="Goto Y."/>
            <person name="Shimizu F."/>
            <person name="Wakebe H."/>
            <person name="Hishigaki H."/>
            <person name="Watanabe T."/>
            <person name="Sugiyama A."/>
            <person name="Takemoto M."/>
            <person name="Kawakami B."/>
            <person name="Yamazaki M."/>
            <person name="Watanabe K."/>
            <person name="Kumagai A."/>
            <person name="Itakura S."/>
            <person name="Fukuzumi Y."/>
            <person name="Fujimori Y."/>
            <person name="Komiyama M."/>
            <person name="Tashiro H."/>
            <person name="Tanigami A."/>
            <person name="Fujiwara T."/>
            <person name="Ono T."/>
            <person name="Yamada K."/>
            <person name="Fujii Y."/>
            <person name="Ozaki K."/>
            <person name="Hirao M."/>
            <person name="Ohmori Y."/>
            <person name="Kawabata A."/>
            <person name="Hikiji T."/>
            <person name="Kobatake N."/>
            <person name="Inagaki H."/>
            <person name="Ikema Y."/>
            <person name="Okamoto S."/>
            <person name="Okitani R."/>
            <person name="Kawakami T."/>
            <person name="Noguchi S."/>
            <person name="Itoh T."/>
            <person name="Shigeta K."/>
            <person name="Senba T."/>
            <person name="Matsumura K."/>
            <person name="Nakajima Y."/>
            <person name="Mizuno T."/>
            <person name="Morinaga M."/>
            <person name="Sasaki M."/>
            <person name="Togashi T."/>
            <person name="Oyama M."/>
            <person name="Hata H."/>
            <person name="Watanabe M."/>
            <person name="Komatsu T."/>
            <person name="Mizushima-Sugano J."/>
            <person name="Satoh T."/>
            <person name="Shirai Y."/>
            <person name="Takahashi Y."/>
            <person name="Nakagawa K."/>
            <person name="Okumura K."/>
            <person name="Nagase T."/>
            <person name="Nomura N."/>
            <person name="Kikuchi H."/>
            <person name="Masuho Y."/>
            <person name="Yamashita R."/>
            <person name="Nakai K."/>
            <person name="Yada T."/>
            <person name="Nakamura Y."/>
            <person name="Ohara O."/>
            <person name="Isogai T."/>
            <person name="Sugano S."/>
        </authorList>
    </citation>
    <scope>NUCLEOTIDE SEQUENCE [LARGE SCALE MRNA] (ISOFORMS 1 AND 2)</scope>
    <source>
        <tissue>Ileal mucosa</tissue>
        <tissue>Trachea</tissue>
    </source>
</reference>
<reference key="3">
    <citation type="journal article" date="2006" name="Nature">
        <title>The DNA sequence, annotation and analysis of human chromosome 3.</title>
        <authorList>
            <person name="Muzny D.M."/>
            <person name="Scherer S.E."/>
            <person name="Kaul R."/>
            <person name="Wang J."/>
            <person name="Yu J."/>
            <person name="Sudbrak R."/>
            <person name="Buhay C.J."/>
            <person name="Chen R."/>
            <person name="Cree A."/>
            <person name="Ding Y."/>
            <person name="Dugan-Rocha S."/>
            <person name="Gill R."/>
            <person name="Gunaratne P."/>
            <person name="Harris R.A."/>
            <person name="Hawes A.C."/>
            <person name="Hernandez J."/>
            <person name="Hodgson A.V."/>
            <person name="Hume J."/>
            <person name="Jackson A."/>
            <person name="Khan Z.M."/>
            <person name="Kovar-Smith C."/>
            <person name="Lewis L.R."/>
            <person name="Lozado R.J."/>
            <person name="Metzker M.L."/>
            <person name="Milosavljevic A."/>
            <person name="Miner G.R."/>
            <person name="Morgan M.B."/>
            <person name="Nazareth L.V."/>
            <person name="Scott G."/>
            <person name="Sodergren E."/>
            <person name="Song X.-Z."/>
            <person name="Steffen D."/>
            <person name="Wei S."/>
            <person name="Wheeler D.A."/>
            <person name="Wright M.W."/>
            <person name="Worley K.C."/>
            <person name="Yuan Y."/>
            <person name="Zhang Z."/>
            <person name="Adams C.Q."/>
            <person name="Ansari-Lari M.A."/>
            <person name="Ayele M."/>
            <person name="Brown M.J."/>
            <person name="Chen G."/>
            <person name="Chen Z."/>
            <person name="Clendenning J."/>
            <person name="Clerc-Blankenburg K.P."/>
            <person name="Chen R."/>
            <person name="Chen Z."/>
            <person name="Davis C."/>
            <person name="Delgado O."/>
            <person name="Dinh H.H."/>
            <person name="Dong W."/>
            <person name="Draper H."/>
            <person name="Ernst S."/>
            <person name="Fu G."/>
            <person name="Gonzalez-Garay M.L."/>
            <person name="Garcia D.K."/>
            <person name="Gillett W."/>
            <person name="Gu J."/>
            <person name="Hao B."/>
            <person name="Haugen E."/>
            <person name="Havlak P."/>
            <person name="He X."/>
            <person name="Hennig S."/>
            <person name="Hu S."/>
            <person name="Huang W."/>
            <person name="Jackson L.R."/>
            <person name="Jacob L.S."/>
            <person name="Kelly S.H."/>
            <person name="Kube M."/>
            <person name="Levy R."/>
            <person name="Li Z."/>
            <person name="Liu B."/>
            <person name="Liu J."/>
            <person name="Liu W."/>
            <person name="Lu J."/>
            <person name="Maheshwari M."/>
            <person name="Nguyen B.-V."/>
            <person name="Okwuonu G.O."/>
            <person name="Palmeiri A."/>
            <person name="Pasternak S."/>
            <person name="Perez L.M."/>
            <person name="Phelps K.A."/>
            <person name="Plopper F.J."/>
            <person name="Qiang B."/>
            <person name="Raymond C."/>
            <person name="Rodriguez R."/>
            <person name="Saenphimmachak C."/>
            <person name="Santibanez J."/>
            <person name="Shen H."/>
            <person name="Shen Y."/>
            <person name="Subramanian S."/>
            <person name="Tabor P.E."/>
            <person name="Verduzco D."/>
            <person name="Waldron L."/>
            <person name="Wang J."/>
            <person name="Wang J."/>
            <person name="Wang Q."/>
            <person name="Williams G.A."/>
            <person name="Wong G.K.-S."/>
            <person name="Yao Z."/>
            <person name="Zhang J."/>
            <person name="Zhang X."/>
            <person name="Zhao G."/>
            <person name="Zhou J."/>
            <person name="Zhou Y."/>
            <person name="Nelson D."/>
            <person name="Lehrach H."/>
            <person name="Reinhardt R."/>
            <person name="Naylor S.L."/>
            <person name="Yang H."/>
            <person name="Olson M."/>
            <person name="Weinstock G."/>
            <person name="Gibbs R.A."/>
        </authorList>
    </citation>
    <scope>NUCLEOTIDE SEQUENCE [LARGE SCALE GENOMIC DNA]</scope>
</reference>
<reference key="4">
    <citation type="submission" date="2005-09" db="EMBL/GenBank/DDBJ databases">
        <authorList>
            <person name="Mural R.J."/>
            <person name="Istrail S."/>
            <person name="Sutton G.G."/>
            <person name="Florea L."/>
            <person name="Halpern A.L."/>
            <person name="Mobarry C.M."/>
            <person name="Lippert R."/>
            <person name="Walenz B."/>
            <person name="Shatkay H."/>
            <person name="Dew I."/>
            <person name="Miller J.R."/>
            <person name="Flanigan M.J."/>
            <person name="Edwards N.J."/>
            <person name="Bolanos R."/>
            <person name="Fasulo D."/>
            <person name="Halldorsson B.V."/>
            <person name="Hannenhalli S."/>
            <person name="Turner R."/>
            <person name="Yooseph S."/>
            <person name="Lu F."/>
            <person name="Nusskern D.R."/>
            <person name="Shue B.C."/>
            <person name="Zheng X.H."/>
            <person name="Zhong F."/>
            <person name="Delcher A.L."/>
            <person name="Huson D.H."/>
            <person name="Kravitz S.A."/>
            <person name="Mouchard L."/>
            <person name="Reinert K."/>
            <person name="Remington K.A."/>
            <person name="Clark A.G."/>
            <person name="Waterman M.S."/>
            <person name="Eichler E.E."/>
            <person name="Adams M.D."/>
            <person name="Hunkapiller M.W."/>
            <person name="Myers E.W."/>
            <person name="Venter J.C."/>
        </authorList>
    </citation>
    <scope>NUCLEOTIDE SEQUENCE [LARGE SCALE GENOMIC DNA]</scope>
</reference>
<reference key="5">
    <citation type="journal article" date="2004" name="Genome Res.">
        <title>The status, quality, and expansion of the NIH full-length cDNA project: the Mammalian Gene Collection (MGC).</title>
        <authorList>
            <consortium name="The MGC Project Team"/>
        </authorList>
    </citation>
    <scope>NUCLEOTIDE SEQUENCE [LARGE SCALE MRNA] (ISOFORM 1)</scope>
    <source>
        <tissue>Testis</tissue>
    </source>
</reference>
<reference key="6">
    <citation type="journal article" date="1997" name="Cell">
        <title>Developmentally regulated mitochondrial fusion mediated by a conserved, novel, predicted GTPase.</title>
        <authorList>
            <person name="Hales K.G."/>
            <person name="Fuller M.T."/>
        </authorList>
    </citation>
    <scope>NUCLEOTIDE SEQUENCE [MRNA] OF 138-741 (ISOFORM 3)</scope>
    <source>
        <tissue>Brain</tissue>
    </source>
</reference>
<reference key="7">
    <citation type="submission" date="1998-03" db="EMBL/GenBank/DDBJ databases">
        <authorList>
            <person name="Yu W."/>
            <person name="Gibbs R.A."/>
        </authorList>
    </citation>
    <scope>NUCLEOTIDE SEQUENCE [LARGE SCALE MRNA] OF 374-741</scope>
    <source>
        <tissue>Brain</tissue>
    </source>
</reference>
<reference key="8">
    <citation type="journal article" date="2001" name="Cancer Res.">
        <title>Novel transmembrane GTPase of non-small cell lung cancer identified by mRNA differential display.</title>
        <authorList>
            <person name="Chung J.-G."/>
            <person name="Yeh K.-T."/>
            <person name="Wu S.-L."/>
            <person name="Hsu N.-Y."/>
            <person name="Chen G.-W."/>
            <person name="Yeh Y.-W."/>
            <person name="Ho H.-C."/>
        </authorList>
    </citation>
    <scope>SUBCELLULAR LOCATION (ISOFORM 2)</scope>
    <scope>TISSUE SPECIFICITY</scope>
    <scope>ALTERNATIVE SPLICING</scope>
</reference>
<reference key="9">
    <citation type="journal article" date="2002" name="J. Cell Sci.">
        <title>Membrane topology and mitochondrial targeting of mitofusins, ubiquitous mammalian homologs of the transmembrane GTPase Fzo.</title>
        <authorList>
            <person name="Rojo M."/>
            <person name="Legros F."/>
            <person name="Chateau D."/>
            <person name="Lombes A."/>
        </authorList>
    </citation>
    <scope>TISSUE SPECIFICITY</scope>
</reference>
<reference key="10">
    <citation type="journal article" date="2002" name="Mol. Biol. Cell">
        <title>Mitochondrial fusion in human cells is efficient, requires the inner membrane potential, and is mediated by mitofusins.</title>
        <authorList>
            <person name="Legros F."/>
            <person name="Lombes A."/>
            <person name="Frachon P."/>
            <person name="Rojo M."/>
        </authorList>
    </citation>
    <scope>FUNCTION</scope>
</reference>
<reference key="11">
    <citation type="journal article" date="2003" name="J. Cell Sci.">
        <title>Mitofusin-1 protein is a generally expressed mediator of mitochondrial fusion in mammalian cells.</title>
        <authorList>
            <person name="Santel A."/>
            <person name="Frank S."/>
            <person name="Gaume B."/>
            <person name="Herrler M."/>
            <person name="Youle R.J."/>
            <person name="Fuller M.T."/>
        </authorList>
    </citation>
    <scope>FUNCTION</scope>
    <scope>SUBCELLULAR LOCATION</scope>
    <scope>SUBUNIT</scope>
    <scope>TISSUE SPECIFICITY</scope>
    <scope>MUTAGENESIS OF LYS-88 AND THR-109</scope>
</reference>
<reference key="12">
    <citation type="journal article" date="2010" name="J. Cell Sci.">
        <title>Loss of MARCH5 mitochondrial E3 ubiquitin ligase induces cellular senescence through dynamin-related protein 1 and mitofusin 1.</title>
        <authorList>
            <person name="Park Y.Y."/>
            <person name="Lee S."/>
            <person name="Karbowski M."/>
            <person name="Neutzner A."/>
            <person name="Youle R.J."/>
            <person name="Cho H."/>
        </authorList>
    </citation>
    <scope>UBIQUITINATION BY MARCHF5</scope>
</reference>
<reference key="13">
    <citation type="journal article" date="2011" name="BMC Syst. Biol.">
        <title>Initial characterization of the human central proteome.</title>
        <authorList>
            <person name="Burkard T.R."/>
            <person name="Planyavsky M."/>
            <person name="Kaupe I."/>
            <person name="Breitwieser F.P."/>
            <person name="Buerckstuemmer T."/>
            <person name="Bennett K.L."/>
            <person name="Superti-Furga G."/>
            <person name="Colinge J."/>
        </authorList>
    </citation>
    <scope>IDENTIFICATION BY MASS SPECTROMETRY [LARGE SCALE ANALYSIS]</scope>
</reference>
<reference key="14">
    <citation type="journal article" date="2013" name="Nat. Neurosci.">
        <title>The Parkinson's disease-linked proteins Fbxo7 and Parkin interact to mediate mitophagy.</title>
        <authorList>
            <person name="Burchell V.S."/>
            <person name="Nelson D.E."/>
            <person name="Sanchez-Martinez A."/>
            <person name="Delgado-Camprubi M."/>
            <person name="Ivatt R.M."/>
            <person name="Pogson J.H."/>
            <person name="Randle S.J."/>
            <person name="Wray S."/>
            <person name="Lewis P.A."/>
            <person name="Houlden H."/>
            <person name="Abramov A.Y."/>
            <person name="Hardy J."/>
            <person name="Wood N.W."/>
            <person name="Whitworth A.J."/>
            <person name="Laman H."/>
            <person name="Plun-Favreau H."/>
        </authorList>
    </citation>
    <scope>UBIQUITINATION</scope>
</reference>
<reference key="15">
    <citation type="journal article" date="2014" name="Diabetes">
        <title>IHG-1 increases mitochondrial fusion and bioenergetic function.</title>
        <authorList>
            <person name="Hickey F.B."/>
            <person name="Corcoran J.B."/>
            <person name="Griffin B."/>
            <person name="Bhreathnach U."/>
            <person name="Mortiboys H."/>
            <person name="Reid H.M."/>
            <person name="Andrews D."/>
            <person name="Byrne S."/>
            <person name="Furlong F."/>
            <person name="Martin F."/>
            <person name="Godson C."/>
            <person name="Murphy M."/>
        </authorList>
    </citation>
    <scope>INTERACTION WITH THG1L</scope>
</reference>
<reference key="16">
    <citation type="journal article" date="2014" name="J. Proteomics">
        <title>An enzyme assisted RP-RPLC approach for in-depth analysis of human liver phosphoproteome.</title>
        <authorList>
            <person name="Bian Y."/>
            <person name="Song C."/>
            <person name="Cheng K."/>
            <person name="Dong M."/>
            <person name="Wang F."/>
            <person name="Huang J."/>
            <person name="Sun D."/>
            <person name="Wang L."/>
            <person name="Ye M."/>
            <person name="Zou H."/>
        </authorList>
    </citation>
    <scope>IDENTIFICATION BY MASS SPECTROMETRY [LARGE SCALE ANALYSIS]</scope>
    <source>
        <tissue>Liver</tissue>
    </source>
</reference>
<reference key="17">
    <citation type="journal article" date="2016" name="J. Cell Biol.">
        <title>Structures of human mitofusin 1 provide insight into mitochondrial tethering.</title>
        <authorList>
            <person name="Qi Y."/>
            <person name="Yan L."/>
            <person name="Yu C."/>
            <person name="Guo X."/>
            <person name="Zhou X."/>
            <person name="Hu X."/>
            <person name="Huang X."/>
            <person name="Rao Z."/>
            <person name="Lou Z."/>
            <person name="Hu J."/>
        </authorList>
    </citation>
    <scope>X-RAY CRYSTALLOGRAPHY (2.65 ANGSTROMS) OF 1-364 AND 696-741 IN COMPLEXES WITH GDP AND GTP ANALOG</scope>
    <scope>FUNCTION</scope>
    <scope>CATALYTIC ACTIVITY</scope>
    <scope>SUBUNIT</scope>
    <scope>SUBCELLULAR LOCATION</scope>
    <scope>DOMAIN</scope>
    <scope>MUTAGENESIS OF LYS-15; LYS-88; PRO-102; ASP-173; ILE-328; LYS-336; LEU-705 AND PHE-733</scope>
</reference>
<reference key="18">
    <citation type="journal article" date="2017" name="Nature">
        <title>MFN1 structures reveal nucleotide-triggered dimerization critical for mitochondrial fusion.</title>
        <authorList>
            <person name="Cao Y.L."/>
            <person name="Meng S."/>
            <person name="Chen Y."/>
            <person name="Feng J.X."/>
            <person name="Gu D.D."/>
            <person name="Yu B."/>
            <person name="Li Y.J."/>
            <person name="Yang J.Y."/>
            <person name="Liao S."/>
            <person name="Chan D.C."/>
            <person name="Gao S."/>
        </authorList>
    </citation>
    <scope>X-RAY CRYSTALLOGRAPHY (1.60 ANGSTROMS) OF 1-364 AND 696-741 IN COMPLEXES WITH GDP; GTP AND ZINC IONS</scope>
    <scope>FUNCTION</scope>
    <scope>CATALYTIC ACTIVITY</scope>
    <scope>SUBUNIT</scope>
    <scope>DOMAIN</scope>
    <scope>MUTAGENESIS OF LYS-15; ARG-74; LYS-99; HIS-107; HIS-144; ASP-189; GLU-209; ARG-238; TRP-239; GLY-309; LYS-336 AND LEU-705</scope>
</reference>
<reference key="19">
    <citation type="journal article" date="2006" name="Science">
        <title>The consensus coding sequences of human breast and colorectal cancers.</title>
        <authorList>
            <person name="Sjoeblom T."/>
            <person name="Jones S."/>
            <person name="Wood L.D."/>
            <person name="Parsons D.W."/>
            <person name="Lin J."/>
            <person name="Barber T.D."/>
            <person name="Mandelker D."/>
            <person name="Leary R.J."/>
            <person name="Ptak J."/>
            <person name="Silliman N."/>
            <person name="Szabo S."/>
            <person name="Buckhaults P."/>
            <person name="Farrell C."/>
            <person name="Meeh P."/>
            <person name="Markowitz S.D."/>
            <person name="Willis J."/>
            <person name="Dawson D."/>
            <person name="Willson J.K.V."/>
            <person name="Gazdar A.F."/>
            <person name="Hartigan J."/>
            <person name="Wu L."/>
            <person name="Liu C."/>
            <person name="Parmigiani G."/>
            <person name="Park B.H."/>
            <person name="Bachman K.E."/>
            <person name="Papadopoulos N."/>
            <person name="Vogelstein B."/>
            <person name="Kinzler K.W."/>
            <person name="Velculescu V.E."/>
        </authorList>
    </citation>
    <scope>VARIANT [LARGE SCALE ANALYSIS] HIS-415</scope>
</reference>
<name>MFN1_HUMAN</name>
<gene>
    <name type="primary">MFN1</name>
</gene>
<dbReference type="EC" id="3.6.5.-" evidence="13 14"/>
<dbReference type="EMBL" id="AF329637">
    <property type="protein sequence ID" value="AAK06840.1"/>
    <property type="molecule type" value="mRNA"/>
</dbReference>
<dbReference type="EMBL" id="AK000700">
    <property type="protein sequence ID" value="BAA91327.1"/>
    <property type="molecule type" value="mRNA"/>
</dbReference>
<dbReference type="EMBL" id="AK314306">
    <property type="protein sequence ID" value="BAG36958.1"/>
    <property type="molecule type" value="mRNA"/>
</dbReference>
<dbReference type="EMBL" id="AC007823">
    <property type="status" value="NOT_ANNOTATED_CDS"/>
    <property type="molecule type" value="Genomic_DNA"/>
</dbReference>
<dbReference type="EMBL" id="AC007620">
    <property type="status" value="NOT_ANNOTATED_CDS"/>
    <property type="molecule type" value="Genomic_DNA"/>
</dbReference>
<dbReference type="EMBL" id="KF457722">
    <property type="status" value="NOT_ANNOTATED_CDS"/>
    <property type="molecule type" value="Genomic_DNA"/>
</dbReference>
<dbReference type="EMBL" id="CH471052">
    <property type="protein sequence ID" value="EAW78406.1"/>
    <property type="molecule type" value="Genomic_DNA"/>
</dbReference>
<dbReference type="EMBL" id="CH471052">
    <property type="protein sequence ID" value="EAW78410.1"/>
    <property type="molecule type" value="Genomic_DNA"/>
</dbReference>
<dbReference type="EMBL" id="CH471052">
    <property type="protein sequence ID" value="EAW78411.1"/>
    <property type="molecule type" value="Genomic_DNA"/>
</dbReference>
<dbReference type="EMBL" id="BC040557">
    <property type="protein sequence ID" value="AAH40557.1"/>
    <property type="molecule type" value="mRNA"/>
</dbReference>
<dbReference type="EMBL" id="U95822">
    <property type="protein sequence ID" value="AAB64220.1"/>
    <property type="molecule type" value="mRNA"/>
</dbReference>
<dbReference type="EMBL" id="AF054986">
    <property type="protein sequence ID" value="AAC09347.1"/>
    <property type="molecule type" value="mRNA"/>
</dbReference>
<dbReference type="CCDS" id="CCDS3228.1">
    <molecule id="Q8IWA4-1"/>
</dbReference>
<dbReference type="RefSeq" id="NP_284941.2">
    <molecule id="Q8IWA4-1"/>
    <property type="nucleotide sequence ID" value="NM_033540.2"/>
</dbReference>
<dbReference type="RefSeq" id="XP_005247653.2">
    <molecule id="Q8IWA4-1"/>
    <property type="nucleotide sequence ID" value="XM_005247596.5"/>
</dbReference>
<dbReference type="RefSeq" id="XP_054203170.1">
    <molecule id="Q8IWA4-1"/>
    <property type="nucleotide sequence ID" value="XM_054347195.1"/>
</dbReference>
<dbReference type="PDB" id="5GNR">
    <property type="method" value="X-ray"/>
    <property type="resolution" value="2.65 A"/>
    <property type="chains" value="A=1-364, A=696-741"/>
</dbReference>
<dbReference type="PDB" id="5GNS">
    <property type="method" value="X-ray"/>
    <property type="resolution" value="2.70 A"/>
    <property type="chains" value="A=1-364, A=696-741"/>
</dbReference>
<dbReference type="PDB" id="5GNT">
    <property type="method" value="X-ray"/>
    <property type="resolution" value="2.67 A"/>
    <property type="chains" value="A=1-364, A=696-741"/>
</dbReference>
<dbReference type="PDB" id="5GNU">
    <property type="method" value="X-ray"/>
    <property type="resolution" value="4.11 A"/>
    <property type="chains" value="A=1-364, A=696-741"/>
</dbReference>
<dbReference type="PDB" id="5GO4">
    <property type="method" value="X-ray"/>
    <property type="resolution" value="2.20 A"/>
    <property type="chains" value="A=1-365, A=696-741"/>
</dbReference>
<dbReference type="PDB" id="5GOE">
    <property type="method" value="X-ray"/>
    <property type="resolution" value="1.80 A"/>
    <property type="chains" value="A=1-369, A=696-741"/>
</dbReference>
<dbReference type="PDB" id="5GOF">
    <property type="method" value="X-ray"/>
    <property type="resolution" value="1.60 A"/>
    <property type="chains" value="A=1-362, A=696-741"/>
</dbReference>
<dbReference type="PDB" id="5GOM">
    <property type="method" value="X-ray"/>
    <property type="resolution" value="2.80 A"/>
    <property type="chains" value="A/B=1-362, A/B=696-741"/>
</dbReference>
<dbReference type="PDB" id="5YEW">
    <property type="method" value="X-ray"/>
    <property type="resolution" value="3.20 A"/>
    <property type="chains" value="A/B/C=1-364, A/B/C=694-741"/>
</dbReference>
<dbReference type="PDBsum" id="5GNR"/>
<dbReference type="PDBsum" id="5GNS"/>
<dbReference type="PDBsum" id="5GNT"/>
<dbReference type="PDBsum" id="5GNU"/>
<dbReference type="PDBsum" id="5GO4"/>
<dbReference type="PDBsum" id="5GOE"/>
<dbReference type="PDBsum" id="5GOF"/>
<dbReference type="PDBsum" id="5GOM"/>
<dbReference type="PDBsum" id="5YEW"/>
<dbReference type="SMR" id="Q8IWA4"/>
<dbReference type="BioGRID" id="120801">
    <property type="interactions" value="55"/>
</dbReference>
<dbReference type="DIP" id="DIP-50289N"/>
<dbReference type="FunCoup" id="Q8IWA4">
    <property type="interactions" value="2295"/>
</dbReference>
<dbReference type="IntAct" id="Q8IWA4">
    <property type="interactions" value="19"/>
</dbReference>
<dbReference type="MINT" id="Q8IWA4"/>
<dbReference type="STRING" id="9606.ENSP00000420617"/>
<dbReference type="TCDB" id="1.N.6.1.2">
    <property type="family name" value="the mitochondrial inner/outer membrane fusion (mmf) family"/>
</dbReference>
<dbReference type="GlyGen" id="Q8IWA4">
    <property type="glycosylation" value="1 site, 1 O-linked glycan (1 site)"/>
</dbReference>
<dbReference type="iPTMnet" id="Q8IWA4"/>
<dbReference type="PhosphoSitePlus" id="Q8IWA4"/>
<dbReference type="SwissPalm" id="Q8IWA4"/>
<dbReference type="BioMuta" id="MFN1"/>
<dbReference type="DMDM" id="150421594"/>
<dbReference type="jPOST" id="Q8IWA4"/>
<dbReference type="MassIVE" id="Q8IWA4"/>
<dbReference type="PaxDb" id="9606-ENSP00000420617"/>
<dbReference type="PeptideAtlas" id="Q8IWA4"/>
<dbReference type="ProteomicsDB" id="70826">
    <molecule id="Q8IWA4-1"/>
</dbReference>
<dbReference type="ProteomicsDB" id="70827">
    <molecule id="Q8IWA4-2"/>
</dbReference>
<dbReference type="ProteomicsDB" id="70828">
    <molecule id="Q8IWA4-3"/>
</dbReference>
<dbReference type="Pumba" id="Q8IWA4"/>
<dbReference type="Antibodypedia" id="33743">
    <property type="antibodies" value="559 antibodies from 41 providers"/>
</dbReference>
<dbReference type="DNASU" id="55669"/>
<dbReference type="Ensembl" id="ENST00000263969.9">
    <molecule id="Q8IWA4-1"/>
    <property type="protein sequence ID" value="ENSP00000263969.5"/>
    <property type="gene ID" value="ENSG00000171109.19"/>
</dbReference>
<dbReference type="Ensembl" id="ENST00000357390.8">
    <molecule id="Q8IWA4-2"/>
    <property type="protein sequence ID" value="ENSP00000349963.4"/>
    <property type="gene ID" value="ENSG00000171109.19"/>
</dbReference>
<dbReference type="Ensembl" id="ENST00000471841.6">
    <molecule id="Q8IWA4-1"/>
    <property type="protein sequence ID" value="ENSP00000420617.1"/>
    <property type="gene ID" value="ENSG00000171109.19"/>
</dbReference>
<dbReference type="GeneID" id="55669"/>
<dbReference type="KEGG" id="hsa:55669"/>
<dbReference type="MANE-Select" id="ENST00000471841.6">
    <property type="protein sequence ID" value="ENSP00000420617.1"/>
    <property type="RefSeq nucleotide sequence ID" value="NM_033540.3"/>
    <property type="RefSeq protein sequence ID" value="NP_284941.2"/>
</dbReference>
<dbReference type="UCSC" id="uc003fjs.4">
    <molecule id="Q8IWA4-1"/>
    <property type="organism name" value="human"/>
</dbReference>
<dbReference type="AGR" id="HGNC:18262"/>
<dbReference type="CTD" id="55669"/>
<dbReference type="DisGeNET" id="55669"/>
<dbReference type="GeneCards" id="MFN1"/>
<dbReference type="HGNC" id="HGNC:18262">
    <property type="gene designation" value="MFN1"/>
</dbReference>
<dbReference type="HPA" id="ENSG00000171109">
    <property type="expression patterns" value="Low tissue specificity"/>
</dbReference>
<dbReference type="MIM" id="608506">
    <property type="type" value="gene"/>
</dbReference>
<dbReference type="neXtProt" id="NX_Q8IWA4"/>
<dbReference type="OpenTargets" id="ENSG00000171109"/>
<dbReference type="PharmGKB" id="PA134945973"/>
<dbReference type="VEuPathDB" id="HostDB:ENSG00000171109"/>
<dbReference type="eggNOG" id="KOG0448">
    <property type="taxonomic scope" value="Eukaryota"/>
</dbReference>
<dbReference type="GeneTree" id="ENSGT00390000013727"/>
<dbReference type="HOGENOM" id="CLU_792918_0_0_1"/>
<dbReference type="InParanoid" id="Q8IWA4"/>
<dbReference type="OMA" id="IMDTINV"/>
<dbReference type="OrthoDB" id="6256226at2759"/>
<dbReference type="PAN-GO" id="Q8IWA4">
    <property type="GO annotations" value="4 GO annotations based on evolutionary models"/>
</dbReference>
<dbReference type="PhylomeDB" id="Q8IWA4"/>
<dbReference type="TreeFam" id="TF314289"/>
<dbReference type="PathwayCommons" id="Q8IWA4"/>
<dbReference type="Reactome" id="R-HSA-5205685">
    <property type="pathway name" value="PINK1-PRKN Mediated Mitophagy"/>
</dbReference>
<dbReference type="Reactome" id="R-HSA-9013419">
    <property type="pathway name" value="RHOT2 GTPase cycle"/>
</dbReference>
<dbReference type="Reactome" id="R-HSA-983231">
    <property type="pathway name" value="Factors involved in megakaryocyte development and platelet production"/>
</dbReference>
<dbReference type="SignaLink" id="Q8IWA4"/>
<dbReference type="SIGNOR" id="Q8IWA4"/>
<dbReference type="BioGRID-ORCS" id="55669">
    <property type="hits" value="30 hits in 1155 CRISPR screens"/>
</dbReference>
<dbReference type="ChiTaRS" id="MFN1">
    <property type="organism name" value="human"/>
</dbReference>
<dbReference type="GeneWiki" id="MFN1"/>
<dbReference type="GenomeRNAi" id="55669"/>
<dbReference type="Pharos" id="Q8IWA4">
    <property type="development level" value="Tbio"/>
</dbReference>
<dbReference type="PRO" id="PR:Q8IWA4"/>
<dbReference type="Proteomes" id="UP000005640">
    <property type="component" value="Chromosome 3"/>
</dbReference>
<dbReference type="RNAct" id="Q8IWA4">
    <property type="molecule type" value="protein"/>
</dbReference>
<dbReference type="Bgee" id="ENSG00000171109">
    <property type="expression patterns" value="Expressed in secondary oocyte and 205 other cell types or tissues"/>
</dbReference>
<dbReference type="ExpressionAtlas" id="Q8IWA4">
    <property type="expression patterns" value="baseline and differential"/>
</dbReference>
<dbReference type="GO" id="GO:0016020">
    <property type="term" value="C:membrane"/>
    <property type="evidence" value="ECO:0000314"/>
    <property type="project" value="UniProtKB"/>
</dbReference>
<dbReference type="GO" id="GO:0005741">
    <property type="term" value="C:mitochondrial outer membrane"/>
    <property type="evidence" value="ECO:0000314"/>
    <property type="project" value="UniProtKB"/>
</dbReference>
<dbReference type="GO" id="GO:0005739">
    <property type="term" value="C:mitochondrion"/>
    <property type="evidence" value="ECO:0000314"/>
    <property type="project" value="HPA"/>
</dbReference>
<dbReference type="GO" id="GO:0098799">
    <property type="term" value="C:outer mitochondrial membrane protein complex"/>
    <property type="evidence" value="ECO:0000314"/>
    <property type="project" value="UniProtKB"/>
</dbReference>
<dbReference type="GO" id="GO:0005525">
    <property type="term" value="F:GTP binding"/>
    <property type="evidence" value="ECO:0007669"/>
    <property type="project" value="UniProtKB-KW"/>
</dbReference>
<dbReference type="GO" id="GO:0003924">
    <property type="term" value="F:GTPase activity"/>
    <property type="evidence" value="ECO:0000314"/>
    <property type="project" value="UniProtKB"/>
</dbReference>
<dbReference type="GO" id="GO:0042802">
    <property type="term" value="F:identical protein binding"/>
    <property type="evidence" value="ECO:0000353"/>
    <property type="project" value="IntAct"/>
</dbReference>
<dbReference type="GO" id="GO:0046039">
    <property type="term" value="P:GTP metabolic process"/>
    <property type="evidence" value="ECO:0000314"/>
    <property type="project" value="UniProtKB"/>
</dbReference>
<dbReference type="GO" id="GO:0008053">
    <property type="term" value="P:mitochondrial fusion"/>
    <property type="evidence" value="ECO:0000314"/>
    <property type="project" value="BHF-UCL"/>
</dbReference>
<dbReference type="GO" id="GO:0051646">
    <property type="term" value="P:mitochondrion localization"/>
    <property type="evidence" value="ECO:0000315"/>
    <property type="project" value="UniProtKB"/>
</dbReference>
<dbReference type="GO" id="GO:0010918">
    <property type="term" value="P:positive regulation of mitochondrial membrane potential"/>
    <property type="evidence" value="ECO:0007669"/>
    <property type="project" value="Ensembl"/>
</dbReference>
<dbReference type="CDD" id="cd09912">
    <property type="entry name" value="DLP_2"/>
    <property type="match status" value="1"/>
</dbReference>
<dbReference type="FunFam" id="1.20.5.110:FF:000012">
    <property type="entry name" value="Mitofusin 2"/>
    <property type="match status" value="1"/>
</dbReference>
<dbReference type="FunFam" id="3.40.50.300:FF:000214">
    <property type="entry name" value="Mitofusin 2"/>
    <property type="match status" value="1"/>
</dbReference>
<dbReference type="Gene3D" id="1.20.5.110">
    <property type="match status" value="1"/>
</dbReference>
<dbReference type="Gene3D" id="3.40.50.300">
    <property type="entry name" value="P-loop containing nucleotide triphosphate hydrolases"/>
    <property type="match status" value="1"/>
</dbReference>
<dbReference type="InterPro" id="IPR045063">
    <property type="entry name" value="Dynamin_N"/>
</dbReference>
<dbReference type="InterPro" id="IPR006884">
    <property type="entry name" value="Fzo/mitofusin_HR2"/>
</dbReference>
<dbReference type="InterPro" id="IPR030381">
    <property type="entry name" value="G_DYNAMIN_dom"/>
</dbReference>
<dbReference type="InterPro" id="IPR027094">
    <property type="entry name" value="Mitofusin_fam"/>
</dbReference>
<dbReference type="InterPro" id="IPR027417">
    <property type="entry name" value="P-loop_NTPase"/>
</dbReference>
<dbReference type="PANTHER" id="PTHR10465:SF2">
    <property type="entry name" value="MITOFUSIN-1"/>
    <property type="match status" value="1"/>
</dbReference>
<dbReference type="PANTHER" id="PTHR10465">
    <property type="entry name" value="TRANSMEMBRANE GTPASE FZO1"/>
    <property type="match status" value="1"/>
</dbReference>
<dbReference type="Pfam" id="PF00350">
    <property type="entry name" value="Dynamin_N"/>
    <property type="match status" value="1"/>
</dbReference>
<dbReference type="Pfam" id="PF04799">
    <property type="entry name" value="Fzo_mitofusin"/>
    <property type="match status" value="1"/>
</dbReference>
<dbReference type="SUPFAM" id="SSF111479">
    <property type="entry name" value="Fzo-like conserved region"/>
    <property type="match status" value="1"/>
</dbReference>
<dbReference type="SUPFAM" id="SSF52540">
    <property type="entry name" value="P-loop containing nucleoside triphosphate hydrolases"/>
    <property type="match status" value="1"/>
</dbReference>
<dbReference type="PROSITE" id="PS51718">
    <property type="entry name" value="G_DYNAMIN_2"/>
    <property type="match status" value="1"/>
</dbReference>
<sequence length="741" mass="84160">MAEPVSPLKHFVLAKKAITAIFDQLLEFVTEGSHFVEATYKNPELDRIATEDDLVEMQGYKDKLSIIGEVLSRRHMKVAFFGRTSSGKSSVINAMLWDKVLPSGIGHITNCFLSVEGTDGDKAYLMTEGSDEKKSVKTVNQLAHALHMDKDLKAGCLVRVFWPKAKCALLRDDLVLVDSPGTDVTTELDSWIDKFCLDADVFVLVANSESTLMNTEKHFFHKVNERLSKPNIFILNNRWDASASEPEYMEDVRRQHMERCLHFLVEELKVVNALEAQNRIFFVSAKEVLSARKQKAQGMPESGVALAEGFHARLQEFQNFEQIFEECISQSAVKTKFEQHTIRAKQILATVKNIMDSVNLAAEDKRHYSVEEREDQIDRLDFIRNQMNLLTLDVKKKIKEVTEEVANKVSCAMTDEICRLSVLVDEFCSEFHPNPDVLKIYKSELNKHIEDGMGRNLADRCTDEVNALVLQTQQEIIENLKPLLPAGIQDKLHTLIPCKKFDLSYNLNYHKLCSDFQEDIVFRFSLGWSSLVHRFLGPRNAQRVLLGLSEPIFQLPRSLASTPTAPTTPATPDNASQEELMITLVTGLASVTSRTSMGIIIVGGVIWKTIGWKLLSVSLTMYGALYLYERLSWTTHAKERAFKQQFVNYATEKLRMIVSSTSANCSHQVKQQIATTFARLCQQVDITQKQLEEEIARLPKEIDQLEKIQNNSKLLRNKAVQLENELENFTKQFLPSSNEES</sequence>
<evidence type="ECO:0000250" key="1">
    <source>
        <dbReference type="UniProtKB" id="Q811U4"/>
    </source>
</evidence>
<evidence type="ECO:0000250" key="2">
    <source>
        <dbReference type="UniProtKB" id="Q8R4Z9"/>
    </source>
</evidence>
<evidence type="ECO:0000255" key="3"/>
<evidence type="ECO:0000255" key="4">
    <source>
        <dbReference type="PROSITE-ProRule" id="PRU01055"/>
    </source>
</evidence>
<evidence type="ECO:0000269" key="5">
    <source>
    </source>
</evidence>
<evidence type="ECO:0000269" key="6">
    <source>
    </source>
</evidence>
<evidence type="ECO:0000269" key="7">
    <source>
    </source>
</evidence>
<evidence type="ECO:0000269" key="8">
    <source>
    </source>
</evidence>
<evidence type="ECO:0000269" key="9">
    <source>
    </source>
</evidence>
<evidence type="ECO:0000269" key="10">
    <source>
    </source>
</evidence>
<evidence type="ECO:0000269" key="11">
    <source>
    </source>
</evidence>
<evidence type="ECO:0000269" key="12">
    <source>
    </source>
</evidence>
<evidence type="ECO:0000269" key="13">
    <source>
    </source>
</evidence>
<evidence type="ECO:0000269" key="14">
    <source>
    </source>
</evidence>
<evidence type="ECO:0000303" key="15">
    <source>
    </source>
</evidence>
<evidence type="ECO:0000303" key="16">
    <source>
    </source>
</evidence>
<evidence type="ECO:0000303" key="17">
    <source>
    </source>
</evidence>
<evidence type="ECO:0000303" key="18">
    <source>
    </source>
</evidence>
<evidence type="ECO:0000305" key="19"/>
<evidence type="ECO:0000305" key="20">
    <source>
    </source>
</evidence>
<evidence type="ECO:0000305" key="21">
    <source>
    </source>
</evidence>
<evidence type="ECO:0007744" key="22">
    <source>
        <dbReference type="PDB" id="5GNR"/>
    </source>
</evidence>
<evidence type="ECO:0007744" key="23">
    <source>
        <dbReference type="PDB" id="5GNS"/>
    </source>
</evidence>
<evidence type="ECO:0007744" key="24">
    <source>
        <dbReference type="PDB" id="5GOE"/>
    </source>
</evidence>
<evidence type="ECO:0007744" key="25">
    <source>
        <dbReference type="PDB" id="5GOF"/>
    </source>
</evidence>
<evidence type="ECO:0007829" key="26">
    <source>
        <dbReference type="PDB" id="5GNR"/>
    </source>
</evidence>
<evidence type="ECO:0007829" key="27">
    <source>
        <dbReference type="PDB" id="5GO4"/>
    </source>
</evidence>
<evidence type="ECO:0007829" key="28">
    <source>
        <dbReference type="PDB" id="5GOE"/>
    </source>
</evidence>
<evidence type="ECO:0007829" key="29">
    <source>
        <dbReference type="PDB" id="5GOF"/>
    </source>
</evidence>
<evidence type="ECO:0007829" key="30">
    <source>
        <dbReference type="PDB" id="5YEW"/>
    </source>
</evidence>
<proteinExistence type="evidence at protein level"/>
<protein>
    <recommendedName>
        <fullName>Mitofusin-1</fullName>
        <ecNumber evidence="13 14">3.6.5.-</ecNumber>
    </recommendedName>
    <alternativeName>
        <fullName evidence="16">Fzo homolog</fullName>
    </alternativeName>
    <alternativeName>
        <fullName>Transmembrane GTPase MFN1</fullName>
    </alternativeName>
</protein>